<accession>Q7VJ92</accession>
<comment type="function">
    <text evidence="1">Catalyzes the reversible adenylation of nicotinate mononucleotide (NaMN) to nicotinic acid adenine dinucleotide (NaAD).</text>
</comment>
<comment type="catalytic activity">
    <reaction evidence="1">
        <text>nicotinate beta-D-ribonucleotide + ATP + H(+) = deamido-NAD(+) + diphosphate</text>
        <dbReference type="Rhea" id="RHEA:22860"/>
        <dbReference type="ChEBI" id="CHEBI:15378"/>
        <dbReference type="ChEBI" id="CHEBI:30616"/>
        <dbReference type="ChEBI" id="CHEBI:33019"/>
        <dbReference type="ChEBI" id="CHEBI:57502"/>
        <dbReference type="ChEBI" id="CHEBI:58437"/>
        <dbReference type="EC" id="2.7.7.18"/>
    </reaction>
</comment>
<comment type="pathway">
    <text evidence="1">Cofactor biosynthesis; NAD(+) biosynthesis; deamido-NAD(+) from nicotinate D-ribonucleotide: step 1/1.</text>
</comment>
<comment type="similarity">
    <text evidence="1">Belongs to the NadD family.</text>
</comment>
<sequence>MQADLSNIIALYGGSFDPLHYAHMEIIRLLRENLLYKRIILMPNYRNPLKSSSFFTPLQRLQMCKILADEMNNAKSCNQKIPYISVSDYEVCQNRSVFSVQSVAFIKEQITKQDTNAQLVFVLGEDSFNNLKQWKDVEKLCKMVDFVLIKREISQKDSQISPHIVPYAHVIKCLDLPPSVAHFSSSSVRSLLQKGQIDEALNLVPVCLHTFIKANFRL</sequence>
<organism>
    <name type="scientific">Helicobacter hepaticus (strain ATCC 51449 / 3B1)</name>
    <dbReference type="NCBI Taxonomy" id="235279"/>
    <lineage>
        <taxon>Bacteria</taxon>
        <taxon>Pseudomonadati</taxon>
        <taxon>Campylobacterota</taxon>
        <taxon>Epsilonproteobacteria</taxon>
        <taxon>Campylobacterales</taxon>
        <taxon>Helicobacteraceae</taxon>
        <taxon>Helicobacter</taxon>
    </lineage>
</organism>
<name>NADD_HELHP</name>
<gene>
    <name evidence="1" type="primary">nadD</name>
    <name type="ordered locus">HH_0351</name>
</gene>
<reference key="1">
    <citation type="journal article" date="2003" name="Proc. Natl. Acad. Sci. U.S.A.">
        <title>The complete genome sequence of the carcinogenic bacterium Helicobacter hepaticus.</title>
        <authorList>
            <person name="Suerbaum S."/>
            <person name="Josenhans C."/>
            <person name="Sterzenbach T."/>
            <person name="Drescher B."/>
            <person name="Brandt P."/>
            <person name="Bell M."/>
            <person name="Droege M."/>
            <person name="Fartmann B."/>
            <person name="Fischer H.-P."/>
            <person name="Ge Z."/>
            <person name="Hoerster A."/>
            <person name="Holland R."/>
            <person name="Klein K."/>
            <person name="Koenig J."/>
            <person name="Macko L."/>
            <person name="Mendz G.L."/>
            <person name="Nyakatura G."/>
            <person name="Schauer D.B."/>
            <person name="Shen Z."/>
            <person name="Weber J."/>
            <person name="Frosch M."/>
            <person name="Fox J.G."/>
        </authorList>
    </citation>
    <scope>NUCLEOTIDE SEQUENCE [LARGE SCALE GENOMIC DNA]</scope>
    <source>
        <strain>ATCC 51449 / 3B1</strain>
    </source>
</reference>
<feature type="chain" id="PRO_0000336697" description="Probable nicotinate-nucleotide adenylyltransferase">
    <location>
        <begin position="1"/>
        <end position="218"/>
    </location>
</feature>
<evidence type="ECO:0000255" key="1">
    <source>
        <dbReference type="HAMAP-Rule" id="MF_00244"/>
    </source>
</evidence>
<dbReference type="EC" id="2.7.7.18" evidence="1"/>
<dbReference type="EMBL" id="AE017125">
    <property type="protein sequence ID" value="AAP76948.1"/>
    <property type="molecule type" value="Genomic_DNA"/>
</dbReference>
<dbReference type="SMR" id="Q7VJ92"/>
<dbReference type="STRING" id="235279.HH_0351"/>
<dbReference type="KEGG" id="hhe:HH_0351"/>
<dbReference type="eggNOG" id="COG1057">
    <property type="taxonomic scope" value="Bacteria"/>
</dbReference>
<dbReference type="HOGENOM" id="CLU_069765_3_2_7"/>
<dbReference type="UniPathway" id="UPA00253">
    <property type="reaction ID" value="UER00332"/>
</dbReference>
<dbReference type="Proteomes" id="UP000002495">
    <property type="component" value="Chromosome"/>
</dbReference>
<dbReference type="GO" id="GO:0005524">
    <property type="term" value="F:ATP binding"/>
    <property type="evidence" value="ECO:0007669"/>
    <property type="project" value="UniProtKB-KW"/>
</dbReference>
<dbReference type="GO" id="GO:0004515">
    <property type="term" value="F:nicotinate-nucleotide adenylyltransferase activity"/>
    <property type="evidence" value="ECO:0007669"/>
    <property type="project" value="UniProtKB-UniRule"/>
</dbReference>
<dbReference type="GO" id="GO:0009435">
    <property type="term" value="P:NAD biosynthetic process"/>
    <property type="evidence" value="ECO:0007669"/>
    <property type="project" value="UniProtKB-UniRule"/>
</dbReference>
<dbReference type="CDD" id="cd02165">
    <property type="entry name" value="NMNAT"/>
    <property type="match status" value="1"/>
</dbReference>
<dbReference type="Gene3D" id="3.40.50.620">
    <property type="entry name" value="HUPs"/>
    <property type="match status" value="1"/>
</dbReference>
<dbReference type="HAMAP" id="MF_00244">
    <property type="entry name" value="NaMN_adenylyltr"/>
    <property type="match status" value="1"/>
</dbReference>
<dbReference type="InterPro" id="IPR004821">
    <property type="entry name" value="Cyt_trans-like"/>
</dbReference>
<dbReference type="InterPro" id="IPR005248">
    <property type="entry name" value="NadD/NMNAT"/>
</dbReference>
<dbReference type="InterPro" id="IPR014729">
    <property type="entry name" value="Rossmann-like_a/b/a_fold"/>
</dbReference>
<dbReference type="NCBIfam" id="TIGR00125">
    <property type="entry name" value="cyt_tran_rel"/>
    <property type="match status" value="1"/>
</dbReference>
<dbReference type="NCBIfam" id="TIGR00482">
    <property type="entry name" value="nicotinate (nicotinamide) nucleotide adenylyltransferase"/>
    <property type="match status" value="1"/>
</dbReference>
<dbReference type="PANTHER" id="PTHR39321">
    <property type="entry name" value="NICOTINATE-NUCLEOTIDE ADENYLYLTRANSFERASE-RELATED"/>
    <property type="match status" value="1"/>
</dbReference>
<dbReference type="PANTHER" id="PTHR39321:SF3">
    <property type="entry name" value="PHOSPHOPANTETHEINE ADENYLYLTRANSFERASE"/>
    <property type="match status" value="1"/>
</dbReference>
<dbReference type="Pfam" id="PF01467">
    <property type="entry name" value="CTP_transf_like"/>
    <property type="match status" value="1"/>
</dbReference>
<dbReference type="SUPFAM" id="SSF52374">
    <property type="entry name" value="Nucleotidylyl transferase"/>
    <property type="match status" value="1"/>
</dbReference>
<keyword id="KW-0067">ATP-binding</keyword>
<keyword id="KW-0520">NAD</keyword>
<keyword id="KW-0547">Nucleotide-binding</keyword>
<keyword id="KW-0548">Nucleotidyltransferase</keyword>
<keyword id="KW-0662">Pyridine nucleotide biosynthesis</keyword>
<keyword id="KW-1185">Reference proteome</keyword>
<keyword id="KW-0808">Transferase</keyword>
<proteinExistence type="inferred from homology"/>
<protein>
    <recommendedName>
        <fullName evidence="1">Probable nicotinate-nucleotide adenylyltransferase</fullName>
        <ecNumber evidence="1">2.7.7.18</ecNumber>
    </recommendedName>
    <alternativeName>
        <fullName evidence="1">Deamido-NAD(+) diphosphorylase</fullName>
    </alternativeName>
    <alternativeName>
        <fullName evidence="1">Deamido-NAD(+) pyrophosphorylase</fullName>
    </alternativeName>
    <alternativeName>
        <fullName evidence="1">Nicotinate mononucleotide adenylyltransferase</fullName>
        <shortName evidence="1">NaMN adenylyltransferase</shortName>
    </alternativeName>
</protein>